<accession>P0C522</accession>
<accession>P15998</accession>
<accession>Q2F8Z9</accession>
<accession>Q2F952</accession>
<accession>Q7JAI5</accession>
<dbReference type="EMBL" id="X51422">
    <property type="protein sequence ID" value="CAA35787.1"/>
    <property type="status" value="ALT_SEQ"/>
    <property type="molecule type" value="Genomic_DNA"/>
</dbReference>
<dbReference type="EMBL" id="BA000029">
    <property type="protein sequence ID" value="BAC19899.2"/>
    <property type="molecule type" value="Genomic_DNA"/>
</dbReference>
<dbReference type="EMBL" id="DQ167400">
    <property type="protein sequence ID" value="AAZ99349.1"/>
    <property type="status" value="ALT_SEQ"/>
    <property type="molecule type" value="Genomic_DNA"/>
</dbReference>
<dbReference type="PIR" id="JQ0411">
    <property type="entry name" value="PWRZAM"/>
</dbReference>
<dbReference type="SMR" id="P0C522"/>
<dbReference type="FunCoup" id="P0C522">
    <property type="interactions" value="1418"/>
</dbReference>
<dbReference type="STRING" id="39947.P0C522"/>
<dbReference type="PaxDb" id="39947-P0C522"/>
<dbReference type="KEGG" id="dosa:atp1"/>
<dbReference type="KEGG" id="osa:6450183"/>
<dbReference type="InParanoid" id="P0C522"/>
<dbReference type="OrthoDB" id="592447at2759"/>
<dbReference type="Proteomes" id="UP000059680">
    <property type="component" value="Mitochondrion"/>
</dbReference>
<dbReference type="GO" id="GO:0005743">
    <property type="term" value="C:mitochondrial inner membrane"/>
    <property type="evidence" value="ECO:0007669"/>
    <property type="project" value="UniProtKB-SubCell"/>
</dbReference>
<dbReference type="GO" id="GO:0005739">
    <property type="term" value="C:mitochondrion"/>
    <property type="evidence" value="ECO:0000305"/>
    <property type="project" value="Gramene"/>
</dbReference>
<dbReference type="GO" id="GO:0045259">
    <property type="term" value="C:proton-transporting ATP synthase complex"/>
    <property type="evidence" value="ECO:0007669"/>
    <property type="project" value="UniProtKB-KW"/>
</dbReference>
<dbReference type="GO" id="GO:0043531">
    <property type="term" value="F:ADP binding"/>
    <property type="evidence" value="ECO:0000318"/>
    <property type="project" value="GO_Central"/>
</dbReference>
<dbReference type="GO" id="GO:0005524">
    <property type="term" value="F:ATP binding"/>
    <property type="evidence" value="ECO:0000318"/>
    <property type="project" value="GO_Central"/>
</dbReference>
<dbReference type="GO" id="GO:0046933">
    <property type="term" value="F:proton-transporting ATP synthase activity, rotational mechanism"/>
    <property type="evidence" value="ECO:0007669"/>
    <property type="project" value="InterPro"/>
</dbReference>
<dbReference type="GO" id="GO:0015986">
    <property type="term" value="P:proton motive force-driven ATP synthesis"/>
    <property type="evidence" value="ECO:0000318"/>
    <property type="project" value="GO_Central"/>
</dbReference>
<dbReference type="CDD" id="cd18113">
    <property type="entry name" value="ATP-synt_F1_alpha_C"/>
    <property type="match status" value="1"/>
</dbReference>
<dbReference type="CDD" id="cd18116">
    <property type="entry name" value="ATP-synt_F1_alpha_N"/>
    <property type="match status" value="1"/>
</dbReference>
<dbReference type="CDD" id="cd01132">
    <property type="entry name" value="F1-ATPase_alpha_CD"/>
    <property type="match status" value="1"/>
</dbReference>
<dbReference type="FunFam" id="1.20.150.20:FF:000001">
    <property type="entry name" value="ATP synthase subunit alpha"/>
    <property type="match status" value="1"/>
</dbReference>
<dbReference type="FunFam" id="2.40.30.20:FF:000001">
    <property type="entry name" value="ATP synthase subunit alpha"/>
    <property type="match status" value="1"/>
</dbReference>
<dbReference type="FunFam" id="3.40.50.300:FF:002432">
    <property type="entry name" value="ATP synthase subunit alpha, mitochondrial"/>
    <property type="match status" value="1"/>
</dbReference>
<dbReference type="Gene3D" id="2.40.30.20">
    <property type="match status" value="1"/>
</dbReference>
<dbReference type="Gene3D" id="1.20.150.20">
    <property type="entry name" value="ATP synthase alpha/beta chain, C-terminal domain"/>
    <property type="match status" value="1"/>
</dbReference>
<dbReference type="Gene3D" id="3.40.50.300">
    <property type="entry name" value="P-loop containing nucleotide triphosphate hydrolases"/>
    <property type="match status" value="1"/>
</dbReference>
<dbReference type="HAMAP" id="MF_01346">
    <property type="entry name" value="ATP_synth_alpha_bact"/>
    <property type="match status" value="1"/>
</dbReference>
<dbReference type="InterPro" id="IPR023366">
    <property type="entry name" value="ATP_synth_asu-like_sf"/>
</dbReference>
<dbReference type="InterPro" id="IPR000793">
    <property type="entry name" value="ATP_synth_asu_C"/>
</dbReference>
<dbReference type="InterPro" id="IPR038376">
    <property type="entry name" value="ATP_synth_asu_C_sf"/>
</dbReference>
<dbReference type="InterPro" id="IPR033732">
    <property type="entry name" value="ATP_synth_F1_a_nt-bd_dom"/>
</dbReference>
<dbReference type="InterPro" id="IPR005294">
    <property type="entry name" value="ATP_synth_F1_asu"/>
</dbReference>
<dbReference type="InterPro" id="IPR020003">
    <property type="entry name" value="ATPase_a/bsu_AS"/>
</dbReference>
<dbReference type="InterPro" id="IPR004100">
    <property type="entry name" value="ATPase_F1/V1/A1_a/bsu_N"/>
</dbReference>
<dbReference type="InterPro" id="IPR036121">
    <property type="entry name" value="ATPase_F1/V1/A1_a/bsu_N_sf"/>
</dbReference>
<dbReference type="InterPro" id="IPR000194">
    <property type="entry name" value="ATPase_F1/V1/A1_a/bsu_nucl-bd"/>
</dbReference>
<dbReference type="InterPro" id="IPR027417">
    <property type="entry name" value="P-loop_NTPase"/>
</dbReference>
<dbReference type="NCBIfam" id="TIGR00962">
    <property type="entry name" value="atpA"/>
    <property type="match status" value="1"/>
</dbReference>
<dbReference type="NCBIfam" id="NF009884">
    <property type="entry name" value="PRK13343.1"/>
    <property type="match status" value="1"/>
</dbReference>
<dbReference type="PANTHER" id="PTHR48082">
    <property type="entry name" value="ATP SYNTHASE SUBUNIT ALPHA, MITOCHONDRIAL"/>
    <property type="match status" value="1"/>
</dbReference>
<dbReference type="PANTHER" id="PTHR48082:SF2">
    <property type="entry name" value="ATP SYNTHASE SUBUNIT ALPHA, MITOCHONDRIAL"/>
    <property type="match status" value="1"/>
</dbReference>
<dbReference type="Pfam" id="PF00006">
    <property type="entry name" value="ATP-synt_ab"/>
    <property type="match status" value="1"/>
</dbReference>
<dbReference type="Pfam" id="PF00306">
    <property type="entry name" value="ATP-synt_ab_C"/>
    <property type="match status" value="1"/>
</dbReference>
<dbReference type="Pfam" id="PF02874">
    <property type="entry name" value="ATP-synt_ab_N"/>
    <property type="match status" value="1"/>
</dbReference>
<dbReference type="PIRSF" id="PIRSF039088">
    <property type="entry name" value="F_ATPase_subunit_alpha"/>
    <property type="match status" value="1"/>
</dbReference>
<dbReference type="SUPFAM" id="SSF47917">
    <property type="entry name" value="C-terminal domain of alpha and beta subunits of F1 ATP synthase"/>
    <property type="match status" value="1"/>
</dbReference>
<dbReference type="SUPFAM" id="SSF50615">
    <property type="entry name" value="N-terminal domain of alpha and beta subunits of F1 ATP synthase"/>
    <property type="match status" value="1"/>
</dbReference>
<dbReference type="SUPFAM" id="SSF52540">
    <property type="entry name" value="P-loop containing nucleoside triphosphate hydrolases"/>
    <property type="match status" value="1"/>
</dbReference>
<dbReference type="PROSITE" id="PS00152">
    <property type="entry name" value="ATPASE_ALPHA_BETA"/>
    <property type="match status" value="1"/>
</dbReference>
<geneLocation type="mitochondrion"/>
<reference key="1">
    <citation type="journal article" date="1990" name="Nucleic Acids Res.">
        <title>Nucleotide sequence of the F1-ATPase alpha subunit gene from rice mitochondria.</title>
        <authorList>
            <person name="Kadowaki K."/>
            <person name="Boireau P."/>
            <person name="Laporte J."/>
        </authorList>
    </citation>
    <scope>NUCLEOTIDE SEQUENCE [GENOMIC DNA]</scope>
    <source>
        <strain>cv. Taichung 65</strain>
        <tissue>Shoot</tissue>
    </source>
</reference>
<reference key="2">
    <citation type="journal article" date="2002" name="Mol. Genet. Genomics">
        <title>The complete sequence of the rice (Oryza sativa L.) mitochondrial genome: frequent DNA sequence acquisition and loss during the evolution of flowering plants.</title>
        <authorList>
            <person name="Notsu Y."/>
            <person name="Masood S."/>
            <person name="Nishikawa T."/>
            <person name="Kubo N."/>
            <person name="Akiduki G."/>
            <person name="Nakazono M."/>
            <person name="Hirai A."/>
            <person name="Kadowaki K."/>
        </authorList>
    </citation>
    <scope>NUCLEOTIDE SEQUENCE [LARGE SCALE GENOMIC DNA]</scope>
    <scope>RNA EDITING</scope>
    <source>
        <strain>cv. Nipponbare</strain>
    </source>
</reference>
<reference key="3">
    <citation type="journal article" date="2006" name="Plant Physiol.">
        <title>The rice mitochondrial genomes and their variations.</title>
        <authorList>
            <person name="Tian X."/>
            <person name="Zheng J."/>
            <person name="Hu S."/>
            <person name="Yu J."/>
        </authorList>
    </citation>
    <scope>NUCLEOTIDE SEQUENCE [GENOMIC DNA]</scope>
    <source>
        <strain>cv. Nipponbare</strain>
    </source>
</reference>
<reference key="4">
    <citation type="journal article" date="2006" name="Proteomics">
        <title>Proteomic analysis of rice leaf, stem and root tissues during growth course.</title>
        <authorList>
            <person name="Nozu Y."/>
            <person name="Tsugita A."/>
            <person name="Kamijo K."/>
        </authorList>
    </citation>
    <scope>PROTEIN SEQUENCE [LARGE SCALE ANALYSIS] OF 1-7</scope>
    <scope>IDENTIFICATION BY MASS SPECTROMETRY</scope>
    <source>
        <strain>cv. Nipponbare</strain>
    </source>
</reference>
<sequence length="509" mass="55373">MEFSPRAAELTTLLESRMTNFYTNFQVDEIGRVVSVGDGIARVYGLNEIQAGEMVEFASGVKGIALNLENENVGIVVFGSDTAIKEGDLVKRTGSIVDVPAGKAMLGRVVDALGVPIDGKGALSDHERRRVEVKAPGIIERKSVHEPMQTGLKAVDSLVPIGRGQRELIIGDRQTGKTAIAIDTILNQKQMNSRGTNESETLYCVYVAIGQKRSTVAQLVQILSEANALEYSILVAATASDPAPLQFLAPYSGCAMGEYFRDNGMHALIIYDDLSKQAVAYRQMSLLLRRPPGREAFPGDVFYLHSRLLERAAKRSDQTGAGSLTALPVIETQAGDVSAYIPTNVISITDGQICLETELFYRGIRPAINVGLSVSRVGSAAQLKAMKQVCGSLKLELAQYREVAAFAQFGSDLDAATQALLNRGARLTEVSKQPQYEPLPIEKQIVVIYAAVNGFCDRMPLDRISQYEKAILSTINPELLKSFNEKGGLTNERKIELDAFLKQTAKEIN</sequence>
<protein>
    <recommendedName>
        <fullName>ATP synthase subunit alpha, mitochondrial</fullName>
    </recommendedName>
</protein>
<keyword id="KW-0066">ATP synthesis</keyword>
<keyword id="KW-0067">ATP-binding</keyword>
<keyword id="KW-0139">CF(1)</keyword>
<keyword id="KW-0903">Direct protein sequencing</keyword>
<keyword id="KW-0375">Hydrogen ion transport</keyword>
<keyword id="KW-0406">Ion transport</keyword>
<keyword id="KW-0472">Membrane</keyword>
<keyword id="KW-0496">Mitochondrion</keyword>
<keyword id="KW-0999">Mitochondrion inner membrane</keyword>
<keyword id="KW-0547">Nucleotide-binding</keyword>
<keyword id="KW-1185">Reference proteome</keyword>
<keyword id="KW-0691">RNA editing</keyword>
<keyword id="KW-0813">Transport</keyword>
<feature type="chain" id="PRO_0000290117" description="ATP synthase subunit alpha, mitochondrial">
    <location>
        <begin position="1"/>
        <end position="509"/>
    </location>
</feature>
<feature type="binding site" evidence="1">
    <location>
        <begin position="171"/>
        <end position="178"/>
    </location>
    <ligand>
        <name>ATP</name>
        <dbReference type="ChEBI" id="CHEBI:30616"/>
    </ligand>
</feature>
<feature type="site" description="Required for activity" evidence="1">
    <location>
        <position position="373"/>
    </location>
</feature>
<comment type="function">
    <text evidence="1">Mitochondrial membrane ATP synthase (F(1)F(0) ATP synthase or Complex V) produces ATP from ADP in the presence of a proton gradient across the membrane which is generated by electron transport complexes of the respiratory chain. F-type ATPases consist of two structural domains, F(1) - containing the extramembraneous catalytic core, and F(0) - containing the membrane proton channel, linked together by a central stalk and a peripheral stalk. During catalysis, ATP synthesis in the catalytic domain of F(1) is coupled via a rotary mechanism of the central stalk subunits to proton translocation. Subunits alpha and beta form the catalytic core in F(1). Rotation of the central stalk against the surrounding alpha(3)beta(3) subunits leads to hydrolysis of ATP in three separate catalytic sites on the beta subunits. Subunit alpha does not bear the catalytic high-affinity ATP-binding sites (By similarity).</text>
</comment>
<comment type="subunit">
    <text>F-type ATPases have 2 components, CF(1) - the catalytic core - and CF(0) - the membrane proton channel. CF(1) has five subunits: alpha(3), beta(3), gamma(1), delta(1), epsilon(1). CF(0) has three main subunits: a, b and c.</text>
</comment>
<comment type="subcellular location">
    <subcellularLocation>
        <location>Mitochondrion</location>
    </subcellularLocation>
    <subcellularLocation>
        <location>Mitochondrion inner membrane</location>
    </subcellularLocation>
    <text>Peripheral membrane protein.</text>
</comment>
<comment type="RNA editing">
    <location>
        <position position="393" evidence="2"/>
    </location>
    <location>
        <position position="431" evidence="2"/>
    </location>
    <location>
        <position position="497" evidence="2"/>
    </location>
    <location>
        <position position="500" evidence="2"/>
    </location>
</comment>
<comment type="similarity">
    <text evidence="3">Belongs to the ATPase alpha/beta chains family.</text>
</comment>
<name>ATPAM_ORYSJ</name>
<proteinExistence type="evidence at protein level"/>
<organism>
    <name type="scientific">Oryza sativa subsp. japonica</name>
    <name type="common">Rice</name>
    <dbReference type="NCBI Taxonomy" id="39947"/>
    <lineage>
        <taxon>Eukaryota</taxon>
        <taxon>Viridiplantae</taxon>
        <taxon>Streptophyta</taxon>
        <taxon>Embryophyta</taxon>
        <taxon>Tracheophyta</taxon>
        <taxon>Spermatophyta</taxon>
        <taxon>Magnoliopsida</taxon>
        <taxon>Liliopsida</taxon>
        <taxon>Poales</taxon>
        <taxon>Poaceae</taxon>
        <taxon>BOP clade</taxon>
        <taxon>Oryzoideae</taxon>
        <taxon>Oryzeae</taxon>
        <taxon>Oryzinae</taxon>
        <taxon>Oryza</taxon>
        <taxon>Oryza sativa</taxon>
    </lineage>
</organism>
<evidence type="ECO:0000250" key="1"/>
<evidence type="ECO:0000269" key="2">
    <source>
    </source>
</evidence>
<evidence type="ECO:0000305" key="3"/>
<gene>
    <name type="primary">ATPA</name>
</gene>